<comment type="function">
    <text>Catalytic subunit of cellulose synthase. It polymerizes uridine 5'-diphosphate glucose to cellulose, which is produced as an extracellular component for mechanical and chemical protection at the onset of the stationary phase, when the cells exhibit multicellular behavior (rdar morphotype). Coexpression of cellulose and thin aggregative fimbriae leads to a hydrophobic network with tightly packed cells embedded in a highly inert matrix.</text>
</comment>
<comment type="catalytic activity">
    <reaction>
        <text>[(1-&gt;4)-beta-D-glucosyl](n) + UDP-alpha-D-glucose = [(1-&gt;4)-beta-D-glucosyl](n+1) + UDP + H(+)</text>
        <dbReference type="Rhea" id="RHEA:19929"/>
        <dbReference type="Rhea" id="RHEA-COMP:10033"/>
        <dbReference type="Rhea" id="RHEA-COMP:10034"/>
        <dbReference type="ChEBI" id="CHEBI:15378"/>
        <dbReference type="ChEBI" id="CHEBI:18246"/>
        <dbReference type="ChEBI" id="CHEBI:58223"/>
        <dbReference type="ChEBI" id="CHEBI:58885"/>
        <dbReference type="EC" id="2.4.1.12"/>
    </reaction>
</comment>
<comment type="cofactor">
    <cofactor evidence="1">
        <name>Mg(2+)</name>
        <dbReference type="ChEBI" id="CHEBI:18420"/>
    </cofactor>
</comment>
<comment type="activity regulation">
    <text evidence="1">Activated by bis-(3'-5') cyclic diguanylic acid (c-di-GMP).</text>
</comment>
<comment type="pathway">
    <text>Glycan metabolism; bacterial cellulose biosynthesis.</text>
</comment>
<comment type="subcellular location">
    <subcellularLocation>
        <location evidence="3">Cell inner membrane</location>
        <topology evidence="3">Multi-pass membrane protein</topology>
    </subcellularLocation>
</comment>
<comment type="domain">
    <text>There are two conserved domains in the globular part of the protein: the N-terminal domain (domain A) contains the conserved DXD motif and is possibly involved in catalysis and substrate binding. The C-terminal domain (domain B) contains the QXXRW motif and is present only in processive glycosyl transferases. It could be involved in the processivity function of the enzyme, possibly required for holding the growing glycan chain in the active site.</text>
</comment>
<comment type="similarity">
    <text evidence="3">Belongs to the glycosyltransferase 2 family.</text>
</comment>
<protein>
    <recommendedName>
        <fullName>Cellulose synthase catalytic subunit [UDP-forming]</fullName>
        <ecNumber>2.4.1.12</ecNumber>
    </recommendedName>
</protein>
<organism>
    <name type="scientific">Salmonella typhimurium (strain LT2 / SGSC1412 / ATCC 700720)</name>
    <dbReference type="NCBI Taxonomy" id="99287"/>
    <lineage>
        <taxon>Bacteria</taxon>
        <taxon>Pseudomonadati</taxon>
        <taxon>Pseudomonadota</taxon>
        <taxon>Gammaproteobacteria</taxon>
        <taxon>Enterobacterales</taxon>
        <taxon>Enterobacteriaceae</taxon>
        <taxon>Salmonella</taxon>
    </lineage>
</organism>
<evidence type="ECO:0000250" key="1"/>
<evidence type="ECO:0000255" key="2"/>
<evidence type="ECO:0000305" key="3"/>
<proteinExistence type="inferred from homology"/>
<dbReference type="EC" id="2.4.1.12"/>
<dbReference type="EMBL" id="AJ315770">
    <property type="protein sequence ID" value="CAC44015.1"/>
    <property type="molecule type" value="Genomic_DNA"/>
</dbReference>
<dbReference type="EMBL" id="AE006468">
    <property type="protein sequence ID" value="AAL22479.1"/>
    <property type="molecule type" value="Genomic_DNA"/>
</dbReference>
<dbReference type="EMBL" id="AJ315148">
    <property type="protein sequence ID" value="CAC86199.1"/>
    <property type="molecule type" value="Genomic_DNA"/>
</dbReference>
<dbReference type="RefSeq" id="WP_001275340.1">
    <property type="nucleotide sequence ID" value="NC_003197.2"/>
</dbReference>
<dbReference type="SMR" id="Q93IN2"/>
<dbReference type="STRING" id="99287.STM3619"/>
<dbReference type="CAZy" id="GT2">
    <property type="family name" value="Glycosyltransferase Family 2"/>
</dbReference>
<dbReference type="PaxDb" id="99287-STM3619"/>
<dbReference type="KEGG" id="stm:STM3619"/>
<dbReference type="PATRIC" id="fig|99287.12.peg.3825"/>
<dbReference type="HOGENOM" id="CLU_011907_5_0_6"/>
<dbReference type="OMA" id="AWYIARP"/>
<dbReference type="PhylomeDB" id="Q93IN2"/>
<dbReference type="BioCyc" id="SENT99287:STM3619-MONOMER"/>
<dbReference type="UniPathway" id="UPA00694"/>
<dbReference type="Proteomes" id="UP000001014">
    <property type="component" value="Chromosome"/>
</dbReference>
<dbReference type="GO" id="GO:0005886">
    <property type="term" value="C:plasma membrane"/>
    <property type="evidence" value="ECO:0000318"/>
    <property type="project" value="GO_Central"/>
</dbReference>
<dbReference type="GO" id="GO:0016760">
    <property type="term" value="F:cellulose synthase (UDP-forming) activity"/>
    <property type="evidence" value="ECO:0007669"/>
    <property type="project" value="UniProtKB-EC"/>
</dbReference>
<dbReference type="GO" id="GO:0035438">
    <property type="term" value="F:cyclic-di-GMP binding"/>
    <property type="evidence" value="ECO:0007669"/>
    <property type="project" value="InterPro"/>
</dbReference>
<dbReference type="GO" id="GO:0016758">
    <property type="term" value="F:hexosyltransferase activity"/>
    <property type="evidence" value="ECO:0000318"/>
    <property type="project" value="GO_Central"/>
</dbReference>
<dbReference type="GO" id="GO:0030244">
    <property type="term" value="P:cellulose biosynthetic process"/>
    <property type="evidence" value="ECO:0007669"/>
    <property type="project" value="UniProtKB-KW"/>
</dbReference>
<dbReference type="GO" id="GO:0006011">
    <property type="term" value="P:UDP-alpha-D-glucose metabolic process"/>
    <property type="evidence" value="ECO:0007669"/>
    <property type="project" value="InterPro"/>
</dbReference>
<dbReference type="CDD" id="cd06421">
    <property type="entry name" value="CESA_CelA_like"/>
    <property type="match status" value="1"/>
</dbReference>
<dbReference type="FunFam" id="2.40.10.220:FF:000001">
    <property type="entry name" value="Cellulose synthase catalytic subunit [UDP-forming]"/>
    <property type="match status" value="1"/>
</dbReference>
<dbReference type="FunFam" id="3.90.550.10:FF:000061">
    <property type="entry name" value="Cellulose synthase catalytic subunit [UDP-forming]"/>
    <property type="match status" value="1"/>
</dbReference>
<dbReference type="Gene3D" id="2.40.10.220">
    <property type="entry name" value="predicted glycosyltransferase like domains"/>
    <property type="match status" value="1"/>
</dbReference>
<dbReference type="Gene3D" id="3.90.550.10">
    <property type="entry name" value="Spore Coat Polysaccharide Biosynthesis Protein SpsA, Chain A"/>
    <property type="match status" value="1"/>
</dbReference>
<dbReference type="InterPro" id="IPR003919">
    <property type="entry name" value="Cell_synth_A"/>
</dbReference>
<dbReference type="InterPro" id="IPR001173">
    <property type="entry name" value="Glyco_trans_2-like"/>
</dbReference>
<dbReference type="InterPro" id="IPR050321">
    <property type="entry name" value="Glycosyltr_2/OpgH_subfam"/>
</dbReference>
<dbReference type="InterPro" id="IPR029044">
    <property type="entry name" value="Nucleotide-diphossugar_trans"/>
</dbReference>
<dbReference type="InterPro" id="IPR009875">
    <property type="entry name" value="PilZ_domain"/>
</dbReference>
<dbReference type="NCBIfam" id="TIGR03030">
    <property type="entry name" value="CelA"/>
    <property type="match status" value="1"/>
</dbReference>
<dbReference type="NCBIfam" id="NF008558">
    <property type="entry name" value="PRK11498.1"/>
    <property type="match status" value="1"/>
</dbReference>
<dbReference type="PANTHER" id="PTHR43867">
    <property type="entry name" value="CELLULOSE SYNTHASE CATALYTIC SUBUNIT A [UDP-FORMING]"/>
    <property type="match status" value="1"/>
</dbReference>
<dbReference type="PANTHER" id="PTHR43867:SF2">
    <property type="entry name" value="CELLULOSE SYNTHASE CATALYTIC SUBUNIT A [UDP-FORMING]"/>
    <property type="match status" value="1"/>
</dbReference>
<dbReference type="Pfam" id="PF00535">
    <property type="entry name" value="Glycos_transf_2"/>
    <property type="match status" value="1"/>
</dbReference>
<dbReference type="Pfam" id="PF07238">
    <property type="entry name" value="PilZ"/>
    <property type="match status" value="1"/>
</dbReference>
<dbReference type="PRINTS" id="PR01439">
    <property type="entry name" value="CELLSNTHASEA"/>
</dbReference>
<dbReference type="SUPFAM" id="SSF53448">
    <property type="entry name" value="Nucleotide-diphospho-sugar transferases"/>
    <property type="match status" value="1"/>
</dbReference>
<dbReference type="SUPFAM" id="SSF141371">
    <property type="entry name" value="PilZ domain-like"/>
    <property type="match status" value="1"/>
</dbReference>
<gene>
    <name type="primary">bcsA</name>
    <name type="ordered locus">STM3619</name>
</gene>
<reference key="1">
    <citation type="journal article" date="2001" name="Mol. Microbiol.">
        <title>The multicellular morphotypes of Salmonella typhimurium and Escherichia coli produce cellulose as the second component of the extracellular matrix.</title>
        <authorList>
            <person name="Zogaj X."/>
            <person name="Nimtz M."/>
            <person name="Rohde M."/>
            <person name="Bokranz W."/>
            <person name="Roemling U."/>
        </authorList>
    </citation>
    <scope>NUCLEOTIDE SEQUENCE [GENOMIC DNA]</scope>
    <source>
        <strain>ATCC 14028 / SGSG 2980 / CDC 6516-60 / NCTC 12023</strain>
    </source>
</reference>
<reference key="2">
    <citation type="journal article" date="2002" name="Mol. Microbiol.">
        <title>Genetic analysis of Salmonella enteritidis biofilm formation: critical role of cellulose.</title>
        <authorList>
            <person name="Solano C."/>
            <person name="Garcia B."/>
            <person name="Valle J."/>
            <person name="Berasain C."/>
            <person name="Ghigo J.-M."/>
            <person name="Gamazo C."/>
            <person name="Lasa I."/>
        </authorList>
    </citation>
    <scope>NUCLEOTIDE SEQUENCE [GENOMIC DNA]</scope>
    <source>
        <strain>LT2</strain>
    </source>
</reference>
<reference key="3">
    <citation type="journal article" date="2001" name="Nature">
        <title>Complete genome sequence of Salmonella enterica serovar Typhimurium LT2.</title>
        <authorList>
            <person name="McClelland M."/>
            <person name="Sanderson K.E."/>
            <person name="Spieth J."/>
            <person name="Clifton S.W."/>
            <person name="Latreille P."/>
            <person name="Courtney L."/>
            <person name="Porwollik S."/>
            <person name="Ali J."/>
            <person name="Dante M."/>
            <person name="Du F."/>
            <person name="Hou S."/>
            <person name="Layman D."/>
            <person name="Leonard S."/>
            <person name="Nguyen C."/>
            <person name="Scott K."/>
            <person name="Holmes A."/>
            <person name="Grewal N."/>
            <person name="Mulvaney E."/>
            <person name="Ryan E."/>
            <person name="Sun H."/>
            <person name="Florea L."/>
            <person name="Miller W."/>
            <person name="Stoneking T."/>
            <person name="Nhan M."/>
            <person name="Waterston R."/>
            <person name="Wilson R.K."/>
        </authorList>
    </citation>
    <scope>NUCLEOTIDE SEQUENCE [LARGE SCALE GENOMIC DNA]</scope>
    <source>
        <strain>LT2 / SGSC1412 / ATCC 700720</strain>
    </source>
</reference>
<feature type="chain" id="PRO_0000059270" description="Cellulose synthase catalytic subunit [UDP-forming]">
    <location>
        <begin position="1"/>
        <end position="874"/>
    </location>
</feature>
<feature type="transmembrane region" description="Helical" evidence="2">
    <location>
        <begin position="30"/>
        <end position="50"/>
    </location>
</feature>
<feature type="transmembrane region" description="Helical" evidence="2">
    <location>
        <begin position="151"/>
        <end position="171"/>
    </location>
</feature>
<feature type="transmembrane region" description="Helical" evidence="2">
    <location>
        <begin position="173"/>
        <end position="193"/>
    </location>
</feature>
<feature type="transmembrane region" description="Helical" evidence="2">
    <location>
        <begin position="230"/>
        <end position="250"/>
    </location>
</feature>
<feature type="transmembrane region" description="Helical" evidence="2">
    <location>
        <begin position="525"/>
        <end position="545"/>
    </location>
</feature>
<feature type="transmembrane region" description="Helical" evidence="2">
    <location>
        <begin position="547"/>
        <end position="567"/>
    </location>
</feature>
<feature type="transmembrane region" description="Helical" evidence="2">
    <location>
        <begin position="592"/>
        <end position="612"/>
    </location>
</feature>
<feature type="transmembrane region" description="Helical" evidence="2">
    <location>
        <begin position="634"/>
        <end position="654"/>
    </location>
</feature>
<feature type="transmembrane region" description="Helical" evidence="2">
    <location>
        <begin position="668"/>
        <end position="688"/>
    </location>
</feature>
<feature type="transmembrane region" description="Helical" evidence="2">
    <location>
        <begin position="833"/>
        <end position="853"/>
    </location>
</feature>
<feature type="domain" description="PilZ">
    <location>
        <begin position="694"/>
        <end position="790"/>
    </location>
</feature>
<feature type="region of interest" description="Catalytic subdomain A">
    <location>
        <begin position="271"/>
        <end position="364"/>
    </location>
</feature>
<feature type="region of interest" description="Catalytic subdomain B">
    <location>
        <begin position="441"/>
        <end position="501"/>
    </location>
</feature>
<feature type="active site" evidence="2">
    <location>
        <position position="313"/>
    </location>
</feature>
<feature type="active site" evidence="2">
    <location>
        <position position="457"/>
    </location>
</feature>
<feature type="binding site" evidence="2">
    <location>
        <position position="360"/>
    </location>
    <ligand>
        <name>substrate</name>
    </ligand>
</feature>
<feature type="binding site" evidence="2">
    <location>
        <position position="362"/>
    </location>
    <ligand>
        <name>substrate</name>
    </ligand>
</feature>
<sequence length="874" mass="100044">MSALSRWLLIPPVSARLSERYQGYRRHGASPFSAALGCLWTILAWIVFPLEHPRWQRIRDGHKALYPHINAARPRPLDPARYLIQTLWLVMISSTKERHEPRWRSFARLKDVRGRYHQWMDTLPERVRQKTTHLEKEKELGHLSNGARRFILGVIVTFSLILALICITQPFNPLSQFIFLLLLWGVALLVRRMPGRFSALMLIVLSLTVSCRYIWWRYTSTLNWDDPVSLVCGLILLFAETYAWIVLVLGYFQVVWPLNRQPVPLPKEMSQWPTVDIFVPTYNEDLNVVKNTIYASLGIDWPKDKLNIWILDDGGRESFRHFARHVGVHYIARTTHEHAKAGNINNALKHAKGEFVAIFDCDHVPTRSFLQMTMGWFLKEKQLAMMQTPHHFFSPDPFERNLGRFRKTPNEGTLFYGLVQDGNDMWDATFFCGSCAVIRRKPLDEIGGIAVETVTEDAHTSLRLHRRGYTSAYMRIPQAAGLATESLSAHIGQRIRWARGMVQIFRLDNPLFGKGLKLAQRLCYLNAMFHFLSGIPRLIFLTAPLAFLLLHAYIIYAPALMIALFVIPHMVHASLTNSKIQGKYRHSFWSEIYETVLAWYIAPPTLVALINPHKGKFNVTAKGGLVEEKYVDWVISRPYIFLVLLNLLGVAAGVWRYYYGPENETLTVIVSLVWVFYNLVILGGAVAVSVESKQVRRAHRVEIAMPGAIAREDGHLFSCTVHDFSDGGLGIKINGQAQVLEGQKVNLLLKRGQQEYVFPTQVVRVTGNEVGLQLMPLTTKQHIDFVQCTFARADTWALWQDSFPEDKPLESLLDILKLGFRGYRHLAEFAPPSVKVIFRSLTALIAWIVSFIPRRPERQAAIQPSDRVMAQAQQ</sequence>
<accession>Q93IN2</accession>
<keyword id="KW-0973">c-di-GMP</keyword>
<keyword id="KW-0997">Cell inner membrane</keyword>
<keyword id="KW-1003">Cell membrane</keyword>
<keyword id="KW-0135">Cellulose biosynthesis</keyword>
<keyword id="KW-0328">Glycosyltransferase</keyword>
<keyword id="KW-0472">Membrane</keyword>
<keyword id="KW-1185">Reference proteome</keyword>
<keyword id="KW-0808">Transferase</keyword>
<keyword id="KW-0812">Transmembrane</keyword>
<keyword id="KW-1133">Transmembrane helix</keyword>
<name>BCSA_SALTY</name>